<evidence type="ECO:0000255" key="1">
    <source>
        <dbReference type="HAMAP-Rule" id="MF_00216"/>
    </source>
</evidence>
<evidence type="ECO:0000256" key="2">
    <source>
        <dbReference type="SAM" id="MobiDB-lite"/>
    </source>
</evidence>
<comment type="function">
    <text evidence="1">Seems to be required for maximal rate of protein biosynthesis. Enhances ribosome dissociation into subunits and stabilizes the binding of the initiator Met-tRNA(I) to 40 S ribosomal subunits.</text>
</comment>
<comment type="similarity">
    <text evidence="1">Belongs to the eIF-1A family.</text>
</comment>
<proteinExistence type="inferred from homology"/>
<accession>A6VJQ7</accession>
<dbReference type="EMBL" id="CP000745">
    <property type="protein sequence ID" value="ABR66683.1"/>
    <property type="molecule type" value="Genomic_DNA"/>
</dbReference>
<dbReference type="SMR" id="A6VJQ7"/>
<dbReference type="STRING" id="426368.MmarC7_1625"/>
<dbReference type="KEGG" id="mmz:MmarC7_1625"/>
<dbReference type="eggNOG" id="arCOG01179">
    <property type="taxonomic scope" value="Archaea"/>
</dbReference>
<dbReference type="HOGENOM" id="CLU_109098_1_2_2"/>
<dbReference type="OrthoDB" id="2586at2157"/>
<dbReference type="GO" id="GO:0003723">
    <property type="term" value="F:RNA binding"/>
    <property type="evidence" value="ECO:0007669"/>
    <property type="project" value="InterPro"/>
</dbReference>
<dbReference type="GO" id="GO:0003743">
    <property type="term" value="F:translation initiation factor activity"/>
    <property type="evidence" value="ECO:0007669"/>
    <property type="project" value="UniProtKB-UniRule"/>
</dbReference>
<dbReference type="CDD" id="cd05793">
    <property type="entry name" value="S1_IF1A"/>
    <property type="match status" value="1"/>
</dbReference>
<dbReference type="Gene3D" id="2.40.50.140">
    <property type="entry name" value="Nucleic acid-binding proteins"/>
    <property type="match status" value="1"/>
</dbReference>
<dbReference type="HAMAP" id="MF_00216">
    <property type="entry name" value="aIF_1A"/>
    <property type="match status" value="1"/>
</dbReference>
<dbReference type="InterPro" id="IPR012340">
    <property type="entry name" value="NA-bd_OB-fold"/>
</dbReference>
<dbReference type="InterPro" id="IPR006196">
    <property type="entry name" value="RNA-binding_domain_S1_IF1"/>
</dbReference>
<dbReference type="InterPro" id="IPR001253">
    <property type="entry name" value="TIF_eIF-1A"/>
</dbReference>
<dbReference type="InterPro" id="IPR018104">
    <property type="entry name" value="TIF_eIF-1A_CS"/>
</dbReference>
<dbReference type="NCBIfam" id="TIGR00523">
    <property type="entry name" value="eIF-1A"/>
    <property type="match status" value="1"/>
</dbReference>
<dbReference type="NCBIfam" id="NF003084">
    <property type="entry name" value="PRK04012.1-3"/>
    <property type="match status" value="1"/>
</dbReference>
<dbReference type="NCBIfam" id="NF003085">
    <property type="entry name" value="PRK04012.1-5"/>
    <property type="match status" value="1"/>
</dbReference>
<dbReference type="PANTHER" id="PTHR21668">
    <property type="entry name" value="EIF-1A"/>
    <property type="match status" value="1"/>
</dbReference>
<dbReference type="Pfam" id="PF01176">
    <property type="entry name" value="eIF-1a"/>
    <property type="match status" value="1"/>
</dbReference>
<dbReference type="SMART" id="SM00652">
    <property type="entry name" value="eIF1a"/>
    <property type="match status" value="1"/>
</dbReference>
<dbReference type="SUPFAM" id="SSF50249">
    <property type="entry name" value="Nucleic acid-binding proteins"/>
    <property type="match status" value="1"/>
</dbReference>
<dbReference type="PROSITE" id="PS01262">
    <property type="entry name" value="IF1A"/>
    <property type="match status" value="1"/>
</dbReference>
<dbReference type="PROSITE" id="PS50832">
    <property type="entry name" value="S1_IF1_TYPE"/>
    <property type="match status" value="1"/>
</dbReference>
<organism>
    <name type="scientific">Methanococcus maripaludis (strain C7 / ATCC BAA-1331)</name>
    <dbReference type="NCBI Taxonomy" id="426368"/>
    <lineage>
        <taxon>Archaea</taxon>
        <taxon>Methanobacteriati</taxon>
        <taxon>Methanobacteriota</taxon>
        <taxon>Methanomada group</taxon>
        <taxon>Methanococci</taxon>
        <taxon>Methanococcales</taxon>
        <taxon>Methanococcaceae</taxon>
        <taxon>Methanococcus</taxon>
    </lineage>
</organism>
<feature type="chain" id="PRO_1000043281" description="Translation initiation factor 1A">
    <location>
        <begin position="1"/>
        <end position="104"/>
    </location>
</feature>
<feature type="domain" description="S1-like" evidence="1">
    <location>
        <begin position="12"/>
        <end position="87"/>
    </location>
</feature>
<feature type="region of interest" description="Disordered" evidence="2">
    <location>
        <begin position="1"/>
        <end position="20"/>
    </location>
</feature>
<feature type="compositionally biased region" description="Low complexity" evidence="2">
    <location>
        <begin position="1"/>
        <end position="14"/>
    </location>
</feature>
<sequence length="104" mass="12297">MRGQQAPPQQPTRVRTPRENENEVLGVIEQMLGASRVRVRCMDGKLRMGRIPGKLKRKIWVREDDVVIVTPWEVQSDEKCDVIWRYTKGQVDWLNKKGYLDFMR</sequence>
<reference key="1">
    <citation type="submission" date="2007-06" db="EMBL/GenBank/DDBJ databases">
        <title>Complete sequence of Methanococcus maripaludis C7.</title>
        <authorList>
            <consortium name="US DOE Joint Genome Institute"/>
            <person name="Copeland A."/>
            <person name="Lucas S."/>
            <person name="Lapidus A."/>
            <person name="Barry K."/>
            <person name="Glavina del Rio T."/>
            <person name="Dalin E."/>
            <person name="Tice H."/>
            <person name="Pitluck S."/>
            <person name="Clum A."/>
            <person name="Schmutz J."/>
            <person name="Larimer F."/>
            <person name="Land M."/>
            <person name="Hauser L."/>
            <person name="Kyrpides N."/>
            <person name="Anderson I."/>
            <person name="Sieprawska-Lupa M."/>
            <person name="Whitman W.B."/>
            <person name="Richardson P."/>
        </authorList>
    </citation>
    <scope>NUCLEOTIDE SEQUENCE [LARGE SCALE GENOMIC DNA]</scope>
    <source>
        <strain>C7 / ATCC BAA-1331</strain>
    </source>
</reference>
<keyword id="KW-0396">Initiation factor</keyword>
<keyword id="KW-0648">Protein biosynthesis</keyword>
<name>IF1A_METM7</name>
<protein>
    <recommendedName>
        <fullName evidence="1">Translation initiation factor 1A</fullName>
        <shortName evidence="1">aIF-1A</shortName>
    </recommendedName>
</protein>
<gene>
    <name type="primary">eIF1A</name>
    <name type="ordered locus">MmarC7_1625</name>
</gene>